<dbReference type="EMBL" id="AF304863">
    <property type="protein sequence ID" value="AAG41199.1"/>
    <property type="molecule type" value="Genomic_DNA"/>
</dbReference>
<dbReference type="EMBL" id="AF304862">
    <property type="protein sequence ID" value="AAG41199.1"/>
    <property type="status" value="JOINED"/>
    <property type="molecule type" value="Genomic_DNA"/>
</dbReference>
<dbReference type="EMBL" id="AF304863">
    <property type="protein sequence ID" value="AAG41200.1"/>
    <property type="molecule type" value="Genomic_DNA"/>
</dbReference>
<dbReference type="EMBL" id="AF304860">
    <property type="protein sequence ID" value="AAG41200.1"/>
    <property type="status" value="JOINED"/>
    <property type="molecule type" value="Genomic_DNA"/>
</dbReference>
<dbReference type="EMBL" id="AF304861">
    <property type="protein sequence ID" value="AAG41200.1"/>
    <property type="status" value="JOINED"/>
    <property type="molecule type" value="Genomic_DNA"/>
</dbReference>
<dbReference type="EMBL" id="AF304862">
    <property type="protein sequence ID" value="AAG41200.1"/>
    <property type="status" value="JOINED"/>
    <property type="molecule type" value="Genomic_DNA"/>
</dbReference>
<dbReference type="EMBL" id="AF304863">
    <property type="protein sequence ID" value="AAG41201.1"/>
    <property type="molecule type" value="Genomic_DNA"/>
</dbReference>
<dbReference type="EMBL" id="AF304861">
    <property type="protein sequence ID" value="AAG41201.1"/>
    <property type="status" value="JOINED"/>
    <property type="molecule type" value="Genomic_DNA"/>
</dbReference>
<dbReference type="EMBL" id="AF304862">
    <property type="protein sequence ID" value="AAG41201.1"/>
    <property type="status" value="JOINED"/>
    <property type="molecule type" value="Genomic_DNA"/>
</dbReference>
<dbReference type="EMBL" id="HE600924">
    <property type="protein sequence ID" value="CAP35019.1"/>
    <property type="molecule type" value="Genomic_DNA"/>
</dbReference>
<dbReference type="RefSeq" id="XP_002643961.1">
    <molecule id="Q9GNL2-1"/>
    <property type="nucleotide sequence ID" value="XM_002643915.1"/>
</dbReference>
<dbReference type="SMR" id="Q9GNL2"/>
<dbReference type="FunCoup" id="Q9GNL2">
    <property type="interactions" value="357"/>
</dbReference>
<dbReference type="STRING" id="6238.Q9GNL2"/>
<dbReference type="EnsemblMetazoa" id="CBG17326b.1">
    <molecule id="Q9GNL2-1"/>
    <property type="protein sequence ID" value="CBG17326b.1"/>
    <property type="gene ID" value="WBGene00036988"/>
</dbReference>
<dbReference type="KEGG" id="cbr:CBG_17326"/>
<dbReference type="CTD" id="8585954"/>
<dbReference type="WormBase" id="CBG17326a">
    <property type="protein sequence ID" value="CBP43403"/>
    <property type="gene ID" value="WBGene00036988"/>
    <property type="gene designation" value="Cbr-lin-14"/>
</dbReference>
<dbReference type="eggNOG" id="ENOG502S18Y">
    <property type="taxonomic scope" value="Eukaryota"/>
</dbReference>
<dbReference type="HOGENOM" id="CLU_520958_0_0_1"/>
<dbReference type="InParanoid" id="Q9GNL2"/>
<dbReference type="OMA" id="PIFPFPQ"/>
<dbReference type="Proteomes" id="UP000008549">
    <property type="component" value="Unassembled WGS sequence"/>
</dbReference>
<dbReference type="GO" id="GO:0005634">
    <property type="term" value="C:nucleus"/>
    <property type="evidence" value="ECO:0007669"/>
    <property type="project" value="UniProtKB-SubCell"/>
</dbReference>
<dbReference type="GO" id="GO:0003677">
    <property type="term" value="F:DNA binding"/>
    <property type="evidence" value="ECO:0007669"/>
    <property type="project" value="UniProtKB-KW"/>
</dbReference>
<sequence length="543" mass="60099">MGKGQPIEPNIEQSLVDLCKRTVAMNLLHCYPTTTEHELSCEEWGNGTERSQSMAACQGCVELRKEVHDLRTAVNLILPMLPLYPQLPNTFTTAANIAAQPALHQVLQQSLLRRKPTAHTPTVPQPECPGQLRTVLSSPGSALPNVMLMNHLMINGLKPVSPTLPNGHIQPAVGEASMQTDEQQVKWSSPSSVDSNGQKTDSSAASAGDNQNIDVIGDGSESPTSSNHSVQELAMLTSHQNLFNAFKDSQFIFNQVPKQEPVAPLRVAPATNGTTNGATKAAGPERKPRKPVNDDIVKIVRNQDLSEENIATFQIPVPKAHLSDPTFRPVSEQQIIQQIIQGKKYDEMEVGETMIQLCKKLAEKRVFGPRLMSQTTVAGLNHSNYSNLPIKGICYIQHVCRKVLYDKFENEEDFWDKFREAMRKLAARCRRVRHAKKTKHNREEAQAEMLSKRYGEDIPFNLNGSGLIIPKSEPSETPAVNGDINMITMGQIGTLLTQFNADRKTPLTEVLPAELLTTFLSYLNRPKQEVQSPPPAQNPQNPN</sequence>
<evidence type="ECO:0000250" key="1">
    <source>
        <dbReference type="UniProtKB" id="Q21446"/>
    </source>
</evidence>
<evidence type="ECO:0000256" key="2">
    <source>
        <dbReference type="SAM" id="MobiDB-lite"/>
    </source>
</evidence>
<evidence type="ECO:0000305" key="3"/>
<name>LIN14_CAEBR</name>
<protein>
    <recommendedName>
        <fullName>Protein lin-14</fullName>
    </recommendedName>
    <alternativeName>
        <fullName>Abnormal cell lineage protein 14</fullName>
    </alternativeName>
</protein>
<comment type="function">
    <text evidence="1">Heterochronic protein which controls the choice of stage specific cell fates. Involved in the temporal progression of vulval fate patterning, possibly by inhibiting lin-12. Acts as a transcription factor involved in the stage-specific repression of insulin/insulin-like growth factor gene ins-33.</text>
</comment>
<comment type="subcellular location">
    <subcellularLocation>
        <location evidence="1">Nucleus</location>
    </subcellularLocation>
    <text evidence="1">May associate with mitotic chromosomes.</text>
</comment>
<comment type="alternative products">
    <event type="alternative splicing"/>
    <isoform>
        <id>Q9GNL2-1</id>
        <name>B1</name>
        <sequence type="displayed"/>
    </isoform>
    <isoform>
        <id>Q9GNL2-2</id>
        <name>A</name>
        <sequence type="described" ref="VSP_012680"/>
    </isoform>
    <isoform>
        <id>Q9GNL2-3</id>
        <name>B2</name>
        <sequence type="described" ref="VSP_012681"/>
    </isoform>
</comment>
<comment type="PTM">
    <text evidence="1">Cleaved by caspase ced-3 in vitro.</text>
</comment>
<organism>
    <name type="scientific">Caenorhabditis briggsae</name>
    <dbReference type="NCBI Taxonomy" id="6238"/>
    <lineage>
        <taxon>Eukaryota</taxon>
        <taxon>Metazoa</taxon>
        <taxon>Ecdysozoa</taxon>
        <taxon>Nematoda</taxon>
        <taxon>Chromadorea</taxon>
        <taxon>Rhabditida</taxon>
        <taxon>Rhabditina</taxon>
        <taxon>Rhabditomorpha</taxon>
        <taxon>Rhabditoidea</taxon>
        <taxon>Rhabditidae</taxon>
        <taxon>Peloderinae</taxon>
        <taxon>Caenorhabditis</taxon>
    </lineage>
</organism>
<reference key="1">
    <citation type="journal article" date="2001" name="Genetics">
        <title>Isoform-specific mutations in the Caenorhabditis elegans heterochronic gene lin-14 affect stage-specific patterning.</title>
        <authorList>
            <person name="Reinhart B.J."/>
            <person name="Ruvkun G."/>
        </authorList>
    </citation>
    <scope>NUCLEOTIDE SEQUENCE [GENOMIC DNA] (ISOFORMS A; B1 AND B2)</scope>
</reference>
<reference key="2">
    <citation type="journal article" date="2003" name="PLoS Biol.">
        <title>The genome sequence of Caenorhabditis briggsae: a platform for comparative genomics.</title>
        <authorList>
            <person name="Stein L.D."/>
            <person name="Bao Z."/>
            <person name="Blasiar D."/>
            <person name="Blumenthal T."/>
            <person name="Brent M.R."/>
            <person name="Chen N."/>
            <person name="Chinwalla A."/>
            <person name="Clarke L."/>
            <person name="Clee C."/>
            <person name="Coghlan A."/>
            <person name="Coulson A."/>
            <person name="D'Eustachio P."/>
            <person name="Fitch D.H.A."/>
            <person name="Fulton L.A."/>
            <person name="Fulton R.E."/>
            <person name="Griffiths-Jones S."/>
            <person name="Harris T.W."/>
            <person name="Hillier L.W."/>
            <person name="Kamath R."/>
            <person name="Kuwabara P.E."/>
            <person name="Mardis E.R."/>
            <person name="Marra M.A."/>
            <person name="Miner T.L."/>
            <person name="Minx P."/>
            <person name="Mullikin J.C."/>
            <person name="Plumb R.W."/>
            <person name="Rogers J."/>
            <person name="Schein J.E."/>
            <person name="Sohrmann M."/>
            <person name="Spieth J."/>
            <person name="Stajich J.E."/>
            <person name="Wei C."/>
            <person name="Willey D."/>
            <person name="Wilson R.K."/>
            <person name="Durbin R.M."/>
            <person name="Waterston R.H."/>
        </authorList>
    </citation>
    <scope>NUCLEOTIDE SEQUENCE [LARGE SCALE GENOMIC DNA]</scope>
    <source>
        <strain>AF16</strain>
    </source>
</reference>
<gene>
    <name type="primary">lin-14</name>
    <name type="ORF">CBG17326</name>
</gene>
<keyword id="KW-0025">Alternative splicing</keyword>
<keyword id="KW-0217">Developmental protein</keyword>
<keyword id="KW-0238">DNA-binding</keyword>
<keyword id="KW-0539">Nucleus</keyword>
<keyword id="KW-1185">Reference proteome</keyword>
<keyword id="KW-0804">Transcription</keyword>
<keyword id="KW-0805">Transcription regulation</keyword>
<feature type="chain" id="PRO_0000084424" description="Protein lin-14">
    <location>
        <begin position="1"/>
        <end position="543"/>
    </location>
</feature>
<feature type="region of interest" description="Disordered" evidence="2">
    <location>
        <begin position="165"/>
        <end position="228"/>
    </location>
</feature>
<feature type="region of interest" description="Disordered" evidence="2">
    <location>
        <begin position="268"/>
        <end position="291"/>
    </location>
</feature>
<feature type="compositionally biased region" description="Polar residues" evidence="2">
    <location>
        <begin position="177"/>
        <end position="213"/>
    </location>
</feature>
<feature type="compositionally biased region" description="Low complexity" evidence="2">
    <location>
        <begin position="268"/>
        <end position="282"/>
    </location>
</feature>
<feature type="splice variant" id="VSP_012680" description="In isoform A." evidence="3">
    <original>MGKGQPIEPNIEQSLVDLCKRTVAMNLLHCYPTTTEHELSCEEWGNGTERSQSMAACQGCVELR</original>
    <variation>MDLPGTSTSDEFLQHFASFNFNSPTSPVGQQHPGIMPTLQAMYPTLIQVPDLKGDYLMRSDISAF</variation>
    <location>
        <begin position="1"/>
        <end position="64"/>
    </location>
</feature>
<feature type="splice variant" id="VSP_012681" description="In isoform B2." evidence="3">
    <location>
        <begin position="1"/>
        <end position="24"/>
    </location>
</feature>
<accession>Q9GNL2</accession>
<accession>A8XQU4</accession>
<accession>Q9GNL0</accession>
<accession>Q9GNL1</accession>
<proteinExistence type="inferred from homology"/>